<reference key="1">
    <citation type="journal article" date="2001" name="Chromosoma">
        <title>Co-localization of chicken DNA topoisomerase IIalpha, but not beta, with sites of DNA replication and possible involvement of a C-terminal region of alpha through its binding to PCNA.</title>
        <authorList>
            <person name="Niimi A."/>
            <person name="Suka N."/>
            <person name="Harata M."/>
            <person name="Kikuchi A."/>
            <person name="Mizuno S."/>
        </authorList>
    </citation>
    <scope>NUCLEOTIDE SEQUENCE [MRNA]</scope>
</reference>
<dbReference type="EC" id="5.6.2.2" evidence="4"/>
<dbReference type="EMBL" id="AB007445">
    <property type="protein sequence ID" value="BAA22539.2"/>
    <property type="molecule type" value="mRNA"/>
</dbReference>
<dbReference type="RefSeq" id="NP_990122.1">
    <property type="nucleotide sequence ID" value="NM_204791.1"/>
</dbReference>
<dbReference type="SMR" id="O42130"/>
<dbReference type="FunCoup" id="O42130">
    <property type="interactions" value="973"/>
</dbReference>
<dbReference type="STRING" id="9031.ENSGALP00000049348"/>
<dbReference type="PaxDb" id="9031-ENSGALP00000039270"/>
<dbReference type="GeneID" id="395570"/>
<dbReference type="KEGG" id="gga:395570"/>
<dbReference type="CTD" id="7153"/>
<dbReference type="VEuPathDB" id="HostDB:geneid_395570"/>
<dbReference type="eggNOG" id="KOG0355">
    <property type="taxonomic scope" value="Eukaryota"/>
</dbReference>
<dbReference type="InParanoid" id="O42130"/>
<dbReference type="OrthoDB" id="276498at2759"/>
<dbReference type="PhylomeDB" id="O42130"/>
<dbReference type="PRO" id="PR:O42130"/>
<dbReference type="Proteomes" id="UP000000539">
    <property type="component" value="Unassembled WGS sequence"/>
</dbReference>
<dbReference type="GO" id="GO:0005694">
    <property type="term" value="C:chromosome"/>
    <property type="evidence" value="ECO:0000314"/>
    <property type="project" value="AgBase"/>
</dbReference>
<dbReference type="GO" id="GO:0000793">
    <property type="term" value="C:condensed chromosome"/>
    <property type="evidence" value="ECO:0000314"/>
    <property type="project" value="AgBase"/>
</dbReference>
<dbReference type="GO" id="GO:0005737">
    <property type="term" value="C:cytoplasm"/>
    <property type="evidence" value="ECO:0000250"/>
    <property type="project" value="UniProtKB"/>
</dbReference>
<dbReference type="GO" id="GO:0009330">
    <property type="term" value="C:DNA topoisomerase type II (double strand cut, ATP-hydrolyzing) complex"/>
    <property type="evidence" value="ECO:0000250"/>
    <property type="project" value="AgBase"/>
</dbReference>
<dbReference type="GO" id="GO:0000792">
    <property type="term" value="C:heterochromatin"/>
    <property type="evidence" value="ECO:0000314"/>
    <property type="project" value="AgBase"/>
</dbReference>
<dbReference type="GO" id="GO:0005730">
    <property type="term" value="C:nucleolus"/>
    <property type="evidence" value="ECO:0000250"/>
    <property type="project" value="UniProtKB"/>
</dbReference>
<dbReference type="GO" id="GO:0005654">
    <property type="term" value="C:nucleoplasm"/>
    <property type="evidence" value="ECO:0000250"/>
    <property type="project" value="AgBase"/>
</dbReference>
<dbReference type="GO" id="GO:0005634">
    <property type="term" value="C:nucleus"/>
    <property type="evidence" value="ECO:0000314"/>
    <property type="project" value="AgBase"/>
</dbReference>
<dbReference type="GO" id="GO:1990904">
    <property type="term" value="C:ribonucleoprotein complex"/>
    <property type="evidence" value="ECO:0000250"/>
    <property type="project" value="UniProtKB"/>
</dbReference>
<dbReference type="GO" id="GO:0005524">
    <property type="term" value="F:ATP binding"/>
    <property type="evidence" value="ECO:0007669"/>
    <property type="project" value="UniProtKB-KW"/>
</dbReference>
<dbReference type="GO" id="GO:0008094">
    <property type="term" value="F:ATP-dependent activity, acting on DNA"/>
    <property type="evidence" value="ECO:0000250"/>
    <property type="project" value="AgBase"/>
</dbReference>
<dbReference type="GO" id="GO:0030332">
    <property type="term" value="F:cyclin binding"/>
    <property type="evidence" value="ECO:0000353"/>
    <property type="project" value="AgBase"/>
</dbReference>
<dbReference type="GO" id="GO:0003677">
    <property type="term" value="F:DNA binding"/>
    <property type="evidence" value="ECO:0000250"/>
    <property type="project" value="AgBase"/>
</dbReference>
<dbReference type="GO" id="GO:0008301">
    <property type="term" value="F:DNA binding, bending"/>
    <property type="evidence" value="ECO:0000250"/>
    <property type="project" value="UniProtKB"/>
</dbReference>
<dbReference type="GO" id="GO:0003918">
    <property type="term" value="F:DNA topoisomerase type II (double strand cut, ATP-hydrolyzing) activity"/>
    <property type="evidence" value="ECO:0000250"/>
    <property type="project" value="UniProtKB"/>
</dbReference>
<dbReference type="GO" id="GO:0000287">
    <property type="term" value="F:magnesium ion binding"/>
    <property type="evidence" value="ECO:0000250"/>
    <property type="project" value="UniProtKB"/>
</dbReference>
<dbReference type="GO" id="GO:0030263">
    <property type="term" value="P:apoptotic chromosome condensation"/>
    <property type="evidence" value="ECO:0000250"/>
    <property type="project" value="AgBase"/>
</dbReference>
<dbReference type="GO" id="GO:0051301">
    <property type="term" value="P:cell division"/>
    <property type="evidence" value="ECO:0000314"/>
    <property type="project" value="AgBase"/>
</dbReference>
<dbReference type="GO" id="GO:0007059">
    <property type="term" value="P:chromosome segregation"/>
    <property type="evidence" value="ECO:0000250"/>
    <property type="project" value="AgBase"/>
</dbReference>
<dbReference type="GO" id="GO:0006974">
    <property type="term" value="P:DNA damage response"/>
    <property type="evidence" value="ECO:0000250"/>
    <property type="project" value="AgBase"/>
</dbReference>
<dbReference type="GO" id="GO:0006260">
    <property type="term" value="P:DNA replication"/>
    <property type="evidence" value="ECO:0000314"/>
    <property type="project" value="AgBase"/>
</dbReference>
<dbReference type="GO" id="GO:0006265">
    <property type="term" value="P:DNA topological change"/>
    <property type="evidence" value="ECO:0000250"/>
    <property type="project" value="UniProtKB"/>
</dbReference>
<dbReference type="GO" id="GO:0043065">
    <property type="term" value="P:positive regulation of apoptotic process"/>
    <property type="evidence" value="ECO:0000250"/>
    <property type="project" value="AgBase"/>
</dbReference>
<dbReference type="GO" id="GO:0000712">
    <property type="term" value="P:resolution of meiotic recombination intermediates"/>
    <property type="evidence" value="ECO:0000318"/>
    <property type="project" value="GO_Central"/>
</dbReference>
<dbReference type="GO" id="GO:0048511">
    <property type="term" value="P:rhythmic process"/>
    <property type="evidence" value="ECO:0007669"/>
    <property type="project" value="UniProtKB-KW"/>
</dbReference>
<dbReference type="GO" id="GO:0000819">
    <property type="term" value="P:sister chromatid segregation"/>
    <property type="evidence" value="ECO:0000318"/>
    <property type="project" value="GO_Central"/>
</dbReference>
<dbReference type="CDD" id="cd16930">
    <property type="entry name" value="HATPase_TopII-like"/>
    <property type="match status" value="1"/>
</dbReference>
<dbReference type="CDD" id="cd00187">
    <property type="entry name" value="TOP4c"/>
    <property type="match status" value="1"/>
</dbReference>
<dbReference type="CDD" id="cd03481">
    <property type="entry name" value="TopoIIA_Trans_ScTopoIIA"/>
    <property type="match status" value="1"/>
</dbReference>
<dbReference type="CDD" id="cd03365">
    <property type="entry name" value="TOPRIM_TopoIIA"/>
    <property type="match status" value="1"/>
</dbReference>
<dbReference type="FunFam" id="1.10.268.10:FF:000002">
    <property type="entry name" value="DNA topoisomerase 2"/>
    <property type="match status" value="1"/>
</dbReference>
<dbReference type="FunFam" id="3.30.1360.40:FF:000003">
    <property type="entry name" value="DNA topoisomerase 2"/>
    <property type="match status" value="1"/>
</dbReference>
<dbReference type="FunFam" id="3.30.1490.30:FF:000001">
    <property type="entry name" value="DNA topoisomerase 2"/>
    <property type="match status" value="1"/>
</dbReference>
<dbReference type="FunFam" id="3.30.230.10:FF:000008">
    <property type="entry name" value="DNA topoisomerase 2"/>
    <property type="match status" value="1"/>
</dbReference>
<dbReference type="FunFam" id="3.30.565.10:FF:000004">
    <property type="entry name" value="DNA topoisomerase 2"/>
    <property type="match status" value="1"/>
</dbReference>
<dbReference type="FunFam" id="3.40.50.670:FF:000001">
    <property type="entry name" value="DNA topoisomerase 2"/>
    <property type="match status" value="2"/>
</dbReference>
<dbReference type="FunFam" id="3.90.199.10:FF:000002">
    <property type="entry name" value="DNA topoisomerase 2"/>
    <property type="match status" value="1"/>
</dbReference>
<dbReference type="Gene3D" id="3.30.1360.40">
    <property type="match status" value="1"/>
</dbReference>
<dbReference type="Gene3D" id="3.30.1490.30">
    <property type="match status" value="1"/>
</dbReference>
<dbReference type="Gene3D" id="3.30.230.10">
    <property type="match status" value="1"/>
</dbReference>
<dbReference type="Gene3D" id="3.40.50.670">
    <property type="match status" value="1"/>
</dbReference>
<dbReference type="Gene3D" id="3.30.565.10">
    <property type="entry name" value="Histidine kinase-like ATPase, C-terminal domain"/>
    <property type="match status" value="1"/>
</dbReference>
<dbReference type="Gene3D" id="3.90.199.10">
    <property type="entry name" value="Topoisomerase II, domain 5"/>
    <property type="match status" value="1"/>
</dbReference>
<dbReference type="Gene3D" id="1.10.268.10">
    <property type="entry name" value="Topoisomerase, domain 3"/>
    <property type="match status" value="1"/>
</dbReference>
<dbReference type="InterPro" id="IPR050634">
    <property type="entry name" value="DNA_Topoisomerase_II"/>
</dbReference>
<dbReference type="InterPro" id="IPR012542">
    <property type="entry name" value="DTHCT"/>
</dbReference>
<dbReference type="InterPro" id="IPR036890">
    <property type="entry name" value="HATPase_C_sf"/>
</dbReference>
<dbReference type="InterPro" id="IPR020568">
    <property type="entry name" value="Ribosomal_Su5_D2-typ_SF"/>
</dbReference>
<dbReference type="InterPro" id="IPR014721">
    <property type="entry name" value="Ribsml_uS5_D2-typ_fold_subgr"/>
</dbReference>
<dbReference type="InterPro" id="IPR001241">
    <property type="entry name" value="Topo_IIA"/>
</dbReference>
<dbReference type="InterPro" id="IPR013760">
    <property type="entry name" value="Topo_IIA-like_dom_sf"/>
</dbReference>
<dbReference type="InterPro" id="IPR013758">
    <property type="entry name" value="Topo_IIA_A/C_ab"/>
</dbReference>
<dbReference type="InterPro" id="IPR013757">
    <property type="entry name" value="Topo_IIA_A_a_sf"/>
</dbReference>
<dbReference type="InterPro" id="IPR013759">
    <property type="entry name" value="Topo_IIA_B_C"/>
</dbReference>
<dbReference type="InterPro" id="IPR013506">
    <property type="entry name" value="Topo_IIA_bsu_dom2"/>
</dbReference>
<dbReference type="InterPro" id="IPR002205">
    <property type="entry name" value="Topo_IIA_dom_A"/>
</dbReference>
<dbReference type="InterPro" id="IPR001154">
    <property type="entry name" value="TopoII_euk"/>
</dbReference>
<dbReference type="InterPro" id="IPR018522">
    <property type="entry name" value="TopoIIA_CS"/>
</dbReference>
<dbReference type="InterPro" id="IPR031660">
    <property type="entry name" value="TOPRIM_C"/>
</dbReference>
<dbReference type="InterPro" id="IPR006171">
    <property type="entry name" value="TOPRIM_dom"/>
</dbReference>
<dbReference type="InterPro" id="IPR034157">
    <property type="entry name" value="TOPRIM_TopoII"/>
</dbReference>
<dbReference type="PANTHER" id="PTHR10169:SF61">
    <property type="entry name" value="DNA TOPOISOMERASE 2-ALPHA"/>
    <property type="match status" value="1"/>
</dbReference>
<dbReference type="PANTHER" id="PTHR10169">
    <property type="entry name" value="DNA TOPOISOMERASE/GYRASE"/>
    <property type="match status" value="1"/>
</dbReference>
<dbReference type="Pfam" id="PF00204">
    <property type="entry name" value="DNA_gyraseB"/>
    <property type="match status" value="1"/>
</dbReference>
<dbReference type="Pfam" id="PF00521">
    <property type="entry name" value="DNA_topoisoIV"/>
    <property type="match status" value="1"/>
</dbReference>
<dbReference type="Pfam" id="PF08070">
    <property type="entry name" value="DTHCT"/>
    <property type="match status" value="1"/>
</dbReference>
<dbReference type="Pfam" id="PF02518">
    <property type="entry name" value="HATPase_c"/>
    <property type="match status" value="1"/>
</dbReference>
<dbReference type="Pfam" id="PF01751">
    <property type="entry name" value="Toprim"/>
    <property type="match status" value="1"/>
</dbReference>
<dbReference type="Pfam" id="PF16898">
    <property type="entry name" value="TOPRIM_C"/>
    <property type="match status" value="1"/>
</dbReference>
<dbReference type="PRINTS" id="PR01158">
    <property type="entry name" value="TOPISMRASEII"/>
</dbReference>
<dbReference type="PRINTS" id="PR00418">
    <property type="entry name" value="TPI2FAMILY"/>
</dbReference>
<dbReference type="SMART" id="SM00433">
    <property type="entry name" value="TOP2c"/>
    <property type="match status" value="1"/>
</dbReference>
<dbReference type="SMART" id="SM00434">
    <property type="entry name" value="TOP4c"/>
    <property type="match status" value="1"/>
</dbReference>
<dbReference type="SUPFAM" id="SSF55874">
    <property type="entry name" value="ATPase domain of HSP90 chaperone/DNA topoisomerase II/histidine kinase"/>
    <property type="match status" value="1"/>
</dbReference>
<dbReference type="SUPFAM" id="SSF54211">
    <property type="entry name" value="Ribosomal protein S5 domain 2-like"/>
    <property type="match status" value="1"/>
</dbReference>
<dbReference type="SUPFAM" id="SSF56719">
    <property type="entry name" value="Type II DNA topoisomerase"/>
    <property type="match status" value="1"/>
</dbReference>
<dbReference type="PROSITE" id="PS52040">
    <property type="entry name" value="TOPO_IIA"/>
    <property type="match status" value="1"/>
</dbReference>
<dbReference type="PROSITE" id="PS00177">
    <property type="entry name" value="TOPOISOMERASE_II"/>
    <property type="match status" value="1"/>
</dbReference>
<dbReference type="PROSITE" id="PS50880">
    <property type="entry name" value="TOPRIM"/>
    <property type="match status" value="1"/>
</dbReference>
<protein>
    <recommendedName>
        <fullName>DNA topoisomerase 2-alpha</fullName>
        <ecNumber evidence="4">5.6.2.2</ecNumber>
    </recommendedName>
    <alternativeName>
        <fullName>DNA topoisomerase II, alpha isozyme</fullName>
    </alternativeName>
</protein>
<organism>
    <name type="scientific">Gallus gallus</name>
    <name type="common">Chicken</name>
    <dbReference type="NCBI Taxonomy" id="9031"/>
    <lineage>
        <taxon>Eukaryota</taxon>
        <taxon>Metazoa</taxon>
        <taxon>Chordata</taxon>
        <taxon>Craniata</taxon>
        <taxon>Vertebrata</taxon>
        <taxon>Euteleostomi</taxon>
        <taxon>Archelosauria</taxon>
        <taxon>Archosauria</taxon>
        <taxon>Dinosauria</taxon>
        <taxon>Saurischia</taxon>
        <taxon>Theropoda</taxon>
        <taxon>Coelurosauria</taxon>
        <taxon>Aves</taxon>
        <taxon>Neognathae</taxon>
        <taxon>Galloanserae</taxon>
        <taxon>Galliformes</taxon>
        <taxon>Phasianidae</taxon>
        <taxon>Phasianinae</taxon>
        <taxon>Gallus</taxon>
    </lineage>
</organism>
<comment type="function">
    <text evidence="2 3">Key decatenating enzyme that alters DNA topology by binding to two double-stranded DNA molecules, generating a double-stranded break in one of the strands, passing the intact strand through the broken strand, and religating the broken strand (By similarity). May play a role in the regulation of circadian rhythm (By similarity).</text>
</comment>
<comment type="catalytic activity">
    <reaction evidence="4">
        <text>ATP-dependent breakage, passage and rejoining of double-stranded DNA.</text>
        <dbReference type="EC" id="5.6.2.2"/>
    </reaction>
</comment>
<comment type="cofactor">
    <cofactor evidence="4">
        <name>Mg(2+)</name>
        <dbReference type="ChEBI" id="CHEBI:18420"/>
    </cofactor>
    <cofactor evidence="4">
        <name>Mn(2+)</name>
        <dbReference type="ChEBI" id="CHEBI:29035"/>
    </cofactor>
    <cofactor evidence="4">
        <name>Ca(2+)</name>
        <dbReference type="ChEBI" id="CHEBI:29108"/>
    </cofactor>
    <text evidence="4">Binds two Mg(2+) per subunit. The magnesium ions form salt bridges with both the protein and the DNA. Can also accept other divalent metal cations, such as Mn(2+) or Ca(2+).</text>
</comment>
<comment type="subunit">
    <text evidence="2">Homodimer.</text>
</comment>
<comment type="subcellular location">
    <subcellularLocation>
        <location evidence="2">Cytoplasm</location>
    </subcellularLocation>
    <subcellularLocation>
        <location evidence="2">Nucleus</location>
        <location evidence="2">Nucleoplasm</location>
    </subcellularLocation>
    <subcellularLocation>
        <location evidence="2">Nucleus</location>
    </subcellularLocation>
    <subcellularLocation>
        <location evidence="2">Nucleus</location>
        <location evidence="2">Nucleolus</location>
    </subcellularLocation>
</comment>
<comment type="miscellaneous">
    <text>Eukaryotic topoisomerase I and II can relax both negative and positive supercoils, whereas prokaryotic enzymes relax only negative supercoils.</text>
</comment>
<comment type="similarity">
    <text evidence="7">Belongs to the type II topoisomerase family.</text>
</comment>
<accession>O42130</accession>
<evidence type="ECO:0000250" key="1">
    <source>
        <dbReference type="UniProtKB" id="P06786"/>
    </source>
</evidence>
<evidence type="ECO:0000250" key="2">
    <source>
        <dbReference type="UniProtKB" id="P11388"/>
    </source>
</evidence>
<evidence type="ECO:0000250" key="3">
    <source>
        <dbReference type="UniProtKB" id="Q01320"/>
    </source>
</evidence>
<evidence type="ECO:0000255" key="4">
    <source>
        <dbReference type="PROSITE-ProRule" id="PRU00995"/>
    </source>
</evidence>
<evidence type="ECO:0000255" key="5">
    <source>
        <dbReference type="PROSITE-ProRule" id="PRU01384"/>
    </source>
</evidence>
<evidence type="ECO:0000256" key="6">
    <source>
        <dbReference type="SAM" id="MobiDB-lite"/>
    </source>
</evidence>
<evidence type="ECO:0000305" key="7"/>
<sequence length="1553" mass="174993">MELLDSPAPLRPLHDNPRLPKADGAQKRLSVERIYQKKTQLEHILLRPDTYIGSVETVTQQMWVFDEDVGLNCRDVTFVPGLYKIFDEILVNAADNKQRDKSMSCIKVTIDPENNTISVWNNGKGIPVVEHKVEKVYVPALIFGQLLTSSNYDDDEKKVTGGRNGYGAKLCNIFSTKFTVETACREYKKLFKQTWTDNMGKAGEMTLKHFDGEDYTCVTFQPDLSKFKMTILDKDIVALMSRRAYDIAGSTKDVKVFLNGKRLPVKGFRSYVDLYLKDKVDETGNALKVIHEEVNSRWEVCLTLSEKGFQQVSFVNSIATTKGGRHVDYVADQIVTKLIDVVKKKNKNGVGVKPFQVKNHMWIFVNSLIENPTFDSQTKENMTLQAKSFGSTCKLSEKFIKGAVGCGIVESILNWVKFKAQTQLNKKCSAVKHTKIKGVPKLDDANDAGSKNSIDCTLILTEGDSAKTLAVSGLGVVGRDKYGVFPLRGKMLNVREASHKQIMENAEINNIIKIVGLQYKKNYEDRESLKSLRYGKIMIMTDQDQDGSHIKGLLINFIHHNWPSLLRHNFLEEFITPIIKVSKNKEEIPFYSIPEFEEWKSSTQNYNSWKIKYYKGLGTSTSKEAKEYFADMARHRIGFKYSGPEDDAAITLAFSKKKVEERKEWLTNFMEDRRQRNVHGLPEDYLYGKDTNYLTYNDFINKELVLFSNSDNERSIPSLVDGLKPGQRKVLFTCFKRNDKREVKGAQLAGSVAEMSSYHHGEASLMMTIINLAQNFVGSNNLNLLQPIGQFGTRLHGGKDSASPRYIFTMLSPLARLLFPPVDDNVLRFLYDDNQRVEPEWYMPIIPMVLINGAEGIGTGWSCKIPNFDIRETVNNIRCLLDGKEPLPMLPSYKNFKGTIDELGPNQYVISGEVSILDSTTIEITELPVRTWTQTYKEQVLEPMLNGTEKTPPLITDYKEYHTDTTVKFVVKMSEEKLAEAEAVGLHKVFKLQTNLTCNSMVLFDHVGFLKKYESPQDILKEFFELRLRYYGLRKEWLIGMLGAESAKLNNQARFILEKIDGKIVIENKPKKELIQVLIQRGYESDPVKAWKELQNKEEEEGDESGEESAAATGPDFNYLLNMPLWYLTKEKKDELCKQRDNKDKELEDLKHKSPSDLWKEDLAAFVEELDAVEAKQMQDEMAGITGKPLKVKGGKQGGKQKVTKAQLAEVMPSPHGIRVVPRVTAEMKAEAEKRIKKKIKSEKNESDEKQEGNSSGDKEPSSLKQRLAQKRKAEQGTKRQTTLPFKPIKKMKRNPWSDSESDSESDDFEVPSKRERVVRQAAAKIKPMVNSDSDADLTSSDEDSEYQENSEGNTDSDTTSKKKPPKAKAVPKEKKGKAPKEKPLPDAVPVRVQNVAAESASQDPAAPPVSVPRAQAVPKKPAAAKKGSTAKDNQPSIMDILTKKKAAPKAPRRAQREESPPSEATAAVAKKPGPPRGRKATKRLTSSSDSDSDFGSRPSKSVAAKKSKRDDDDSYSIDLTADSPAAAAPRTRPGRLKKPVQYLESSDEDDMF</sequence>
<feature type="chain" id="PRO_0000145367" description="DNA topoisomerase 2-alpha">
    <location>
        <begin position="1"/>
        <end position="1553"/>
    </location>
</feature>
<feature type="domain" description="Toprim" evidence="4">
    <location>
        <begin position="456"/>
        <end position="573"/>
    </location>
</feature>
<feature type="domain" description="Topo IIA-type catalytic" evidence="5">
    <location>
        <begin position="716"/>
        <end position="1163"/>
    </location>
</feature>
<feature type="region of interest" description="Disordered" evidence="6">
    <location>
        <begin position="1"/>
        <end position="25"/>
    </location>
</feature>
<feature type="region of interest" description="Interaction with DNA" evidence="2">
    <location>
        <begin position="343"/>
        <end position="345"/>
    </location>
</feature>
<feature type="region of interest" description="Interaction with DNA" evidence="2">
    <location>
        <begin position="991"/>
        <end position="1000"/>
    </location>
</feature>
<feature type="region of interest" description="Disordered" evidence="6">
    <location>
        <begin position="1095"/>
        <end position="1114"/>
    </location>
</feature>
<feature type="region of interest" description="Disordered" evidence="6">
    <location>
        <begin position="1186"/>
        <end position="1553"/>
    </location>
</feature>
<feature type="compositionally biased region" description="Basic and acidic residues" evidence="6">
    <location>
        <begin position="12"/>
        <end position="25"/>
    </location>
</feature>
<feature type="compositionally biased region" description="Acidic residues" evidence="6">
    <location>
        <begin position="1098"/>
        <end position="1107"/>
    </location>
</feature>
<feature type="compositionally biased region" description="Basic and acidic residues" evidence="6">
    <location>
        <begin position="1242"/>
        <end position="1262"/>
    </location>
</feature>
<feature type="compositionally biased region" description="Acidic residues" evidence="6">
    <location>
        <begin position="1300"/>
        <end position="1310"/>
    </location>
</feature>
<feature type="compositionally biased region" description="Acidic residues" evidence="6">
    <location>
        <begin position="1334"/>
        <end position="1349"/>
    </location>
</feature>
<feature type="compositionally biased region" description="Basic and acidic residues" evidence="6">
    <location>
        <begin position="1371"/>
        <end position="1385"/>
    </location>
</feature>
<feature type="compositionally biased region" description="Low complexity" evidence="6">
    <location>
        <begin position="1413"/>
        <end position="1432"/>
    </location>
</feature>
<feature type="compositionally biased region" description="Basic residues" evidence="6">
    <location>
        <begin position="1444"/>
        <end position="1454"/>
    </location>
</feature>
<feature type="compositionally biased region" description="Low complexity" evidence="6">
    <location>
        <begin position="1517"/>
        <end position="1532"/>
    </location>
</feature>
<feature type="active site" description="O-(5'-phospho-DNA)-tyrosine intermediate" evidence="5">
    <location>
        <position position="806"/>
    </location>
</feature>
<feature type="binding site" evidence="2">
    <location>
        <position position="92"/>
    </location>
    <ligand>
        <name>ATP</name>
        <dbReference type="ChEBI" id="CHEBI:30616"/>
    </ligand>
</feature>
<feature type="binding site" evidence="2">
    <location>
        <position position="121"/>
    </location>
    <ligand>
        <name>ATP</name>
        <dbReference type="ChEBI" id="CHEBI:30616"/>
    </ligand>
</feature>
<feature type="binding site" evidence="2">
    <location>
        <begin position="149"/>
        <end position="151"/>
    </location>
    <ligand>
        <name>ATP</name>
        <dbReference type="ChEBI" id="CHEBI:30616"/>
    </ligand>
</feature>
<feature type="binding site" evidence="2">
    <location>
        <begin position="162"/>
        <end position="169"/>
    </location>
    <ligand>
        <name>ATP</name>
        <dbReference type="ChEBI" id="CHEBI:30616"/>
    </ligand>
</feature>
<feature type="binding site" evidence="2">
    <location>
        <begin position="377"/>
        <end position="379"/>
    </location>
    <ligand>
        <name>ATP</name>
        <dbReference type="ChEBI" id="CHEBI:30616"/>
    </ligand>
</feature>
<feature type="binding site" evidence="4">
    <location>
        <position position="462"/>
    </location>
    <ligand>
        <name>Mg(2+)</name>
        <dbReference type="ChEBI" id="CHEBI:18420"/>
        <label>1</label>
        <note>catalytic</note>
    </ligand>
</feature>
<feature type="binding site" evidence="4">
    <location>
        <position position="542"/>
    </location>
    <ligand>
        <name>Mg(2+)</name>
        <dbReference type="ChEBI" id="CHEBI:18420"/>
        <label>1</label>
        <note>catalytic</note>
    </ligand>
</feature>
<feature type="binding site" evidence="4">
    <location>
        <position position="542"/>
    </location>
    <ligand>
        <name>Mg(2+)</name>
        <dbReference type="ChEBI" id="CHEBI:18420"/>
        <label>2</label>
    </ligand>
</feature>
<feature type="binding site" evidence="4">
    <location>
        <position position="544"/>
    </location>
    <ligand>
        <name>Mg(2+)</name>
        <dbReference type="ChEBI" id="CHEBI:18420"/>
        <label>2</label>
    </ligand>
</feature>
<feature type="site" description="Interaction with DNA" evidence="4">
    <location>
        <position position="490"/>
    </location>
</feature>
<feature type="site" description="Interaction with DNA" evidence="4">
    <location>
        <position position="493"/>
    </location>
</feature>
<feature type="site" description="Interaction with DNA" evidence="4">
    <location>
        <position position="662"/>
    </location>
</feature>
<feature type="site" description="Interaction with DNA" evidence="4">
    <location>
        <position position="663"/>
    </location>
</feature>
<feature type="site" description="Interaction with DNA" evidence="4">
    <location>
        <position position="724"/>
    </location>
</feature>
<feature type="site" description="Interaction with DNA" evidence="4">
    <location>
        <position position="758"/>
    </location>
</feature>
<feature type="site" description="Interaction with DNA" evidence="4">
    <location>
        <position position="764"/>
    </location>
</feature>
<feature type="site" description="Transition state stabilizer" evidence="1">
    <location>
        <position position="805"/>
    </location>
</feature>
<feature type="site" description="Important for DNA bending; intercalates between base pairs of target DNA" evidence="1">
    <location>
        <position position="857"/>
    </location>
</feature>
<feature type="site" description="Interaction with DNA" evidence="4">
    <location>
        <position position="932"/>
    </location>
</feature>
<proteinExistence type="evidence at transcript level"/>
<name>TOP2A_CHICK</name>
<gene>
    <name type="primary">TOP2A</name>
</gene>
<keyword id="KW-0067">ATP-binding</keyword>
<keyword id="KW-0090">Biological rhythms</keyword>
<keyword id="KW-0963">Cytoplasm</keyword>
<keyword id="KW-0238">DNA-binding</keyword>
<keyword id="KW-0413">Isomerase</keyword>
<keyword id="KW-0460">Magnesium</keyword>
<keyword id="KW-0479">Metal-binding</keyword>
<keyword id="KW-0547">Nucleotide-binding</keyword>
<keyword id="KW-0539">Nucleus</keyword>
<keyword id="KW-1185">Reference proteome</keyword>
<keyword id="KW-0799">Topoisomerase</keyword>